<comment type="catalytic activity">
    <reaction evidence="1">
        <text>urea + 2 H2O + H(+) = hydrogencarbonate + 2 NH4(+)</text>
        <dbReference type="Rhea" id="RHEA:20557"/>
        <dbReference type="ChEBI" id="CHEBI:15377"/>
        <dbReference type="ChEBI" id="CHEBI:15378"/>
        <dbReference type="ChEBI" id="CHEBI:16199"/>
        <dbReference type="ChEBI" id="CHEBI:17544"/>
        <dbReference type="ChEBI" id="CHEBI:28938"/>
        <dbReference type="EC" id="3.5.1.5"/>
    </reaction>
</comment>
<comment type="pathway">
    <text evidence="1">Nitrogen metabolism; urea degradation; CO(2) and NH(3) from urea (urease route): step 1/1.</text>
</comment>
<comment type="subunit">
    <text evidence="1">Heterotrimer of UreA (gamma), UreB (beta) and UreC (alpha) subunits. Three heterotrimers associate to form the active enzyme.</text>
</comment>
<comment type="subcellular location">
    <subcellularLocation>
        <location evidence="1">Cytoplasm</location>
    </subcellularLocation>
</comment>
<comment type="similarity">
    <text evidence="1">Belongs to the urease gamma subunit family.</text>
</comment>
<sequence length="100" mass="11256">MHFTQREQDKLMLVIAADLARRRQQRGLKLNYPEAVAIISFELLEGARDGKTVAELMSYGKQILGEDDVMEGVADMLTEMEIEATFPDGTKLITVHHPIV</sequence>
<evidence type="ECO:0000255" key="1">
    <source>
        <dbReference type="HAMAP-Rule" id="MF_00739"/>
    </source>
</evidence>
<name>URE3_STAXY</name>
<accession>P42875</accession>
<dbReference type="EC" id="3.5.1.5" evidence="1"/>
<dbReference type="EMBL" id="X74600">
    <property type="protein sequence ID" value="CAA52678.1"/>
    <property type="molecule type" value="Genomic_DNA"/>
</dbReference>
<dbReference type="PIR" id="S38483">
    <property type="entry name" value="S38483"/>
</dbReference>
<dbReference type="RefSeq" id="WP_017723823.1">
    <property type="nucleotide sequence ID" value="NZ_CABIVW010000005.1"/>
</dbReference>
<dbReference type="SMR" id="P42875"/>
<dbReference type="STRING" id="1288.AWC37_10755"/>
<dbReference type="GeneID" id="97226968"/>
<dbReference type="eggNOG" id="COG0831">
    <property type="taxonomic scope" value="Bacteria"/>
</dbReference>
<dbReference type="OrthoDB" id="9793527at2"/>
<dbReference type="UniPathway" id="UPA00258">
    <property type="reaction ID" value="UER00370"/>
</dbReference>
<dbReference type="GO" id="GO:0005737">
    <property type="term" value="C:cytoplasm"/>
    <property type="evidence" value="ECO:0007669"/>
    <property type="project" value="UniProtKB-SubCell"/>
</dbReference>
<dbReference type="GO" id="GO:0016151">
    <property type="term" value="F:nickel cation binding"/>
    <property type="evidence" value="ECO:0007669"/>
    <property type="project" value="InterPro"/>
</dbReference>
<dbReference type="GO" id="GO:0009039">
    <property type="term" value="F:urease activity"/>
    <property type="evidence" value="ECO:0007669"/>
    <property type="project" value="UniProtKB-UniRule"/>
</dbReference>
<dbReference type="GO" id="GO:0043419">
    <property type="term" value="P:urea catabolic process"/>
    <property type="evidence" value="ECO:0007669"/>
    <property type="project" value="UniProtKB-UniRule"/>
</dbReference>
<dbReference type="CDD" id="cd00390">
    <property type="entry name" value="Urease_gamma"/>
    <property type="match status" value="1"/>
</dbReference>
<dbReference type="Gene3D" id="3.30.280.10">
    <property type="entry name" value="Urease, gamma-like subunit"/>
    <property type="match status" value="1"/>
</dbReference>
<dbReference type="HAMAP" id="MF_00739">
    <property type="entry name" value="Urease_gamma"/>
    <property type="match status" value="1"/>
</dbReference>
<dbReference type="InterPro" id="IPR012010">
    <property type="entry name" value="Urease_gamma"/>
</dbReference>
<dbReference type="InterPro" id="IPR002026">
    <property type="entry name" value="Urease_gamma/gamma-beta_su"/>
</dbReference>
<dbReference type="InterPro" id="IPR036463">
    <property type="entry name" value="Urease_gamma_sf"/>
</dbReference>
<dbReference type="InterPro" id="IPR050069">
    <property type="entry name" value="Urease_subunit"/>
</dbReference>
<dbReference type="NCBIfam" id="NF009712">
    <property type="entry name" value="PRK13241.1"/>
    <property type="match status" value="1"/>
</dbReference>
<dbReference type="NCBIfam" id="TIGR00193">
    <property type="entry name" value="urease_gam"/>
    <property type="match status" value="1"/>
</dbReference>
<dbReference type="PANTHER" id="PTHR33569">
    <property type="entry name" value="UREASE"/>
    <property type="match status" value="1"/>
</dbReference>
<dbReference type="PANTHER" id="PTHR33569:SF1">
    <property type="entry name" value="UREASE"/>
    <property type="match status" value="1"/>
</dbReference>
<dbReference type="Pfam" id="PF00547">
    <property type="entry name" value="Urease_gamma"/>
    <property type="match status" value="1"/>
</dbReference>
<dbReference type="PIRSF" id="PIRSF001223">
    <property type="entry name" value="Urease_gamma"/>
    <property type="match status" value="1"/>
</dbReference>
<dbReference type="SUPFAM" id="SSF54111">
    <property type="entry name" value="Urease, gamma-subunit"/>
    <property type="match status" value="1"/>
</dbReference>
<keyword id="KW-0963">Cytoplasm</keyword>
<keyword id="KW-0903">Direct protein sequencing</keyword>
<keyword id="KW-0378">Hydrolase</keyword>
<reference key="1">
    <citation type="journal article" date="1994" name="Arch. Microbiol.">
        <title>Threonine is present instead of cysteine at the active site of urease from Staphylococcus xylosus.</title>
        <authorList>
            <person name="Jose J."/>
            <person name="Schaefer U.K."/>
            <person name="Kaltwasser H."/>
        </authorList>
    </citation>
    <scope>NUCLEOTIDE SEQUENCE [GENOMIC DNA]</scope>
    <scope>PROTEIN SEQUENCE OF 1-5</scope>
    <source>
        <strain>DSM 20267 / Isolate C2A</strain>
    </source>
</reference>
<organism>
    <name type="scientific">Staphylococcus xylosus</name>
    <dbReference type="NCBI Taxonomy" id="1288"/>
    <lineage>
        <taxon>Bacteria</taxon>
        <taxon>Bacillati</taxon>
        <taxon>Bacillota</taxon>
        <taxon>Bacilli</taxon>
        <taxon>Bacillales</taxon>
        <taxon>Staphylococcaceae</taxon>
        <taxon>Staphylococcus</taxon>
    </lineage>
</organism>
<feature type="chain" id="PRO_0000098047" description="Urease subunit gamma">
    <location>
        <begin position="1"/>
        <end position="100"/>
    </location>
</feature>
<gene>
    <name evidence="1" type="primary">ureA</name>
</gene>
<proteinExistence type="evidence at protein level"/>
<protein>
    <recommendedName>
        <fullName evidence="1">Urease subunit gamma</fullName>
        <ecNumber evidence="1">3.5.1.5</ecNumber>
    </recommendedName>
    <alternativeName>
        <fullName evidence="1">Urea amidohydrolase subunit gamma</fullName>
    </alternativeName>
</protein>